<comment type="function">
    <text evidence="2">Rab effector playing a role in late endocytic transport to degradative compartments. Involved in the regulation of lysosomal morphology and distribution. Induces recruitment of dynein-dynactin motor complexes to Rab7A-containing late endosome and lysosome compartments. Promotes centripetal migration of phagosomes and the fusion of phagosomes with the late endosomes and lysosomes.</text>
</comment>
<comment type="subunit">
    <text evidence="2 7">Homodimer. Interacts with RAB7A. Interacts with RAB34 (By similarity). Identified in a complex with MREG and DCTN1; interacts directly with MREG (PubMed:22275436). Interacts with CLN3 (By similarity). Interacts with FLCN; the interaction is direct and promotes association between RILP and RAB34 (By similarity).</text>
</comment>
<comment type="subcellular location">
    <subcellularLocation>
        <location evidence="2">Late endosome membrane</location>
    </subcellularLocation>
    <subcellularLocation>
        <location evidence="2">Lysosome membrane</location>
    </subcellularLocation>
    <subcellularLocation>
        <location evidence="2">Cytoplasmic vesicle</location>
        <location evidence="2">Phagosome membrane</location>
    </subcellularLocation>
    <text evidence="2">Associated with late endosomal, lysosomal and phagosomal membranes. The interaction with RAB7A is necessary for its recruitment to phagosomes.</text>
</comment>
<comment type="sequence caution" evidence="8">
    <conflict type="erroneous initiation">
        <sequence resource="EMBL-CDS" id="AAH51502"/>
    </conflict>
</comment>
<gene>
    <name type="primary">Rilp</name>
</gene>
<sequence length="369" mass="41139">MEPRRAAPRLPSQASSSVGAGSAAELVYHLAGALGTELQGLARRFGPDAAAGLVPLVVRALELLEKAAVGPAPDSLQVSAQQAEVELRRLREENQRLRQELGSGPQEERALLRQLKEVTDRQRDELRAHNRDLQRRSQETEALQEQLQRLLLINSELRHKLAAVQTQLRAAQDRERERQIAQDGSSQLAKEQSLEPDAATSDDPVDTQKQPGNLPEAVQCGFSREELKQILQERNELKANVFLLKEELAYFQRELLTDHRVPGLLLEAMKVAVKKQRRKIKAKMLGTPEEAESSEDEDGSWLLLSNDKEDVPLVPESRIQNFFGLWYRGETEAPEAETSNPASSSLQKGEETPQQPHLQPVNSPPAPNS</sequence>
<accession>Q5ND29</accession>
<accession>Q80WB8</accession>
<accession>Q8CHY9</accession>
<feature type="chain" id="PRO_0000097340" description="Rab-interacting lysosomal protein">
    <location>
        <begin position="1"/>
        <end position="369"/>
    </location>
</feature>
<feature type="domain" description="RH1" evidence="4">
    <location>
        <begin position="10"/>
        <end position="100"/>
    </location>
</feature>
<feature type="domain" description="RH2" evidence="5">
    <location>
        <begin position="219"/>
        <end position="295"/>
    </location>
</feature>
<feature type="region of interest" description="Disordered" evidence="6">
    <location>
        <begin position="173"/>
        <end position="219"/>
    </location>
</feature>
<feature type="region of interest" description="Necessary for interaction with RAB7A and RAB34 and lysosomal distribution and morphology" evidence="1">
    <location>
        <begin position="251"/>
        <end position="312"/>
    </location>
</feature>
<feature type="region of interest" description="Disordered" evidence="6">
    <location>
        <begin position="332"/>
        <end position="369"/>
    </location>
</feature>
<feature type="coiled-coil region" evidence="3">
    <location>
        <begin position="74"/>
        <end position="177"/>
    </location>
</feature>
<feature type="compositionally biased region" description="Polar residues" evidence="6">
    <location>
        <begin position="337"/>
        <end position="361"/>
    </location>
</feature>
<feature type="modified residue" description="Phosphothreonine" evidence="2">
    <location>
        <position position="287"/>
    </location>
</feature>
<feature type="modified residue" description="Phosphoserine" evidence="2">
    <location>
        <position position="293"/>
    </location>
</feature>
<feature type="modified residue" description="Phosphoserine" evidence="2">
    <location>
        <position position="294"/>
    </location>
</feature>
<keyword id="KW-0175">Coiled coil</keyword>
<keyword id="KW-0968">Cytoplasmic vesicle</keyword>
<keyword id="KW-0967">Endosome</keyword>
<keyword id="KW-0458">Lysosome</keyword>
<keyword id="KW-0472">Membrane</keyword>
<keyword id="KW-0597">Phosphoprotein</keyword>
<keyword id="KW-0653">Protein transport</keyword>
<keyword id="KW-1185">Reference proteome</keyword>
<keyword id="KW-0813">Transport</keyword>
<evidence type="ECO:0000250" key="1"/>
<evidence type="ECO:0000250" key="2">
    <source>
        <dbReference type="UniProtKB" id="Q96NA2"/>
    </source>
</evidence>
<evidence type="ECO:0000255" key="3"/>
<evidence type="ECO:0000255" key="4">
    <source>
        <dbReference type="PROSITE-ProRule" id="PRU01112"/>
    </source>
</evidence>
<evidence type="ECO:0000255" key="5">
    <source>
        <dbReference type="PROSITE-ProRule" id="PRU01113"/>
    </source>
</evidence>
<evidence type="ECO:0000256" key="6">
    <source>
        <dbReference type="SAM" id="MobiDB-lite"/>
    </source>
</evidence>
<evidence type="ECO:0000269" key="7">
    <source>
    </source>
</evidence>
<evidence type="ECO:0000305" key="8"/>
<proteinExistence type="evidence at protein level"/>
<organism>
    <name type="scientific">Mus musculus</name>
    <name type="common">Mouse</name>
    <dbReference type="NCBI Taxonomy" id="10090"/>
    <lineage>
        <taxon>Eukaryota</taxon>
        <taxon>Metazoa</taxon>
        <taxon>Chordata</taxon>
        <taxon>Craniata</taxon>
        <taxon>Vertebrata</taxon>
        <taxon>Euteleostomi</taxon>
        <taxon>Mammalia</taxon>
        <taxon>Eutheria</taxon>
        <taxon>Euarchontoglires</taxon>
        <taxon>Glires</taxon>
        <taxon>Rodentia</taxon>
        <taxon>Myomorpha</taxon>
        <taxon>Muroidea</taxon>
        <taxon>Muridae</taxon>
        <taxon>Murinae</taxon>
        <taxon>Mus</taxon>
        <taxon>Mus</taxon>
    </lineage>
</organism>
<dbReference type="EMBL" id="AK139016">
    <property type="protein sequence ID" value="BAE23863.1"/>
    <property type="molecule type" value="mRNA"/>
</dbReference>
<dbReference type="EMBL" id="AL591496">
    <property type="status" value="NOT_ANNOTATED_CDS"/>
    <property type="molecule type" value="Genomic_DNA"/>
</dbReference>
<dbReference type="EMBL" id="BC038146">
    <property type="protein sequence ID" value="AAH38146.1"/>
    <property type="molecule type" value="mRNA"/>
</dbReference>
<dbReference type="EMBL" id="BC051502">
    <property type="protein sequence ID" value="AAH51502.1"/>
    <property type="status" value="ALT_INIT"/>
    <property type="molecule type" value="mRNA"/>
</dbReference>
<dbReference type="CCDS" id="CCDS25049.1"/>
<dbReference type="RefSeq" id="NP_001025109.1">
    <property type="nucleotide sequence ID" value="NM_001029938.2"/>
</dbReference>
<dbReference type="SMR" id="Q5ND29"/>
<dbReference type="BioGRID" id="235024">
    <property type="interactions" value="1"/>
</dbReference>
<dbReference type="FunCoup" id="Q5ND29">
    <property type="interactions" value="200"/>
</dbReference>
<dbReference type="STRING" id="10090.ENSMUSP00000037238"/>
<dbReference type="iPTMnet" id="Q5ND29"/>
<dbReference type="PhosphoSitePlus" id="Q5ND29"/>
<dbReference type="PaxDb" id="10090-ENSMUSP00000037238"/>
<dbReference type="ProteomicsDB" id="255216"/>
<dbReference type="Antibodypedia" id="42527">
    <property type="antibodies" value="75 antibodies from 25 providers"/>
</dbReference>
<dbReference type="Ensembl" id="ENSMUST00000042972.7">
    <property type="protein sequence ID" value="ENSMUSP00000037238.7"/>
    <property type="gene ID" value="ENSMUSG00000038195.7"/>
</dbReference>
<dbReference type="GeneID" id="280408"/>
<dbReference type="KEGG" id="mmu:280408"/>
<dbReference type="UCSC" id="uc007kdz.1">
    <property type="organism name" value="mouse"/>
</dbReference>
<dbReference type="AGR" id="MGI:2144271"/>
<dbReference type="CTD" id="83547"/>
<dbReference type="MGI" id="MGI:2144271">
    <property type="gene designation" value="Rilp"/>
</dbReference>
<dbReference type="VEuPathDB" id="HostDB:ENSMUSG00000038195"/>
<dbReference type="eggNOG" id="ENOG502QVB3">
    <property type="taxonomic scope" value="Eukaryota"/>
</dbReference>
<dbReference type="GeneTree" id="ENSGT00940000161117"/>
<dbReference type="HOGENOM" id="CLU_044133_1_0_1"/>
<dbReference type="InParanoid" id="Q5ND29"/>
<dbReference type="OMA" id="HSCGPRV"/>
<dbReference type="OrthoDB" id="10069524at2759"/>
<dbReference type="PhylomeDB" id="Q5ND29"/>
<dbReference type="TreeFam" id="TF313489"/>
<dbReference type="Reactome" id="R-MMU-2132295">
    <property type="pathway name" value="MHC class II antigen presentation"/>
</dbReference>
<dbReference type="BioGRID-ORCS" id="280408">
    <property type="hits" value="4 hits in 77 CRISPR screens"/>
</dbReference>
<dbReference type="ChiTaRS" id="Rilp">
    <property type="organism name" value="mouse"/>
</dbReference>
<dbReference type="PRO" id="PR:Q5ND29"/>
<dbReference type="Proteomes" id="UP000000589">
    <property type="component" value="Chromosome 11"/>
</dbReference>
<dbReference type="RNAct" id="Q5ND29">
    <property type="molecule type" value="protein"/>
</dbReference>
<dbReference type="Bgee" id="ENSMUSG00000038195">
    <property type="expression patterns" value="Expressed in interventricular septum and 124 other cell types or tissues"/>
</dbReference>
<dbReference type="ExpressionAtlas" id="Q5ND29">
    <property type="expression patterns" value="baseline and differential"/>
</dbReference>
<dbReference type="GO" id="GO:0031902">
    <property type="term" value="C:late endosome membrane"/>
    <property type="evidence" value="ECO:0007669"/>
    <property type="project" value="UniProtKB-SubCell"/>
</dbReference>
<dbReference type="GO" id="GO:0005765">
    <property type="term" value="C:lysosomal membrane"/>
    <property type="evidence" value="ECO:0007669"/>
    <property type="project" value="UniProtKB-SubCell"/>
</dbReference>
<dbReference type="GO" id="GO:0005739">
    <property type="term" value="C:mitochondrion"/>
    <property type="evidence" value="ECO:0007005"/>
    <property type="project" value="MGI"/>
</dbReference>
<dbReference type="GO" id="GO:0030670">
    <property type="term" value="C:phagocytic vesicle membrane"/>
    <property type="evidence" value="ECO:0007669"/>
    <property type="project" value="UniProtKB-SubCell"/>
</dbReference>
<dbReference type="GO" id="GO:0032991">
    <property type="term" value="C:protein-containing complex"/>
    <property type="evidence" value="ECO:0000314"/>
    <property type="project" value="MGI"/>
</dbReference>
<dbReference type="GO" id="GO:0051959">
    <property type="term" value="F:dynein light intermediate chain binding"/>
    <property type="evidence" value="ECO:0007669"/>
    <property type="project" value="Ensembl"/>
</dbReference>
<dbReference type="GO" id="GO:0046983">
    <property type="term" value="F:protein dimerization activity"/>
    <property type="evidence" value="ECO:0007669"/>
    <property type="project" value="InterPro"/>
</dbReference>
<dbReference type="GO" id="GO:0031267">
    <property type="term" value="F:small GTPase binding"/>
    <property type="evidence" value="ECO:0007669"/>
    <property type="project" value="Ensembl"/>
</dbReference>
<dbReference type="GO" id="GO:0045022">
    <property type="term" value="P:early endosome to late endosome transport"/>
    <property type="evidence" value="ECO:0007669"/>
    <property type="project" value="Ensembl"/>
</dbReference>
<dbReference type="GO" id="GO:0008333">
    <property type="term" value="P:endosome to lysosome transport"/>
    <property type="evidence" value="ECO:0007669"/>
    <property type="project" value="Ensembl"/>
</dbReference>
<dbReference type="GO" id="GO:0032509">
    <property type="term" value="P:endosome transport via multivesicular body sorting pathway"/>
    <property type="evidence" value="ECO:0007669"/>
    <property type="project" value="Ensembl"/>
</dbReference>
<dbReference type="GO" id="GO:0070676">
    <property type="term" value="P:intralumenal vesicle formation"/>
    <property type="evidence" value="ECO:0007669"/>
    <property type="project" value="Ensembl"/>
</dbReference>
<dbReference type="GO" id="GO:0042177">
    <property type="term" value="P:negative regulation of protein catabolic process"/>
    <property type="evidence" value="ECO:0007669"/>
    <property type="project" value="Ensembl"/>
</dbReference>
<dbReference type="GO" id="GO:0045732">
    <property type="term" value="P:positive regulation of protein catabolic process"/>
    <property type="evidence" value="ECO:0007669"/>
    <property type="project" value="Ensembl"/>
</dbReference>
<dbReference type="GO" id="GO:0015031">
    <property type="term" value="P:protein transport"/>
    <property type="evidence" value="ECO:0007669"/>
    <property type="project" value="UniProtKB-KW"/>
</dbReference>
<dbReference type="CDD" id="cd14445">
    <property type="entry name" value="RILP-like"/>
    <property type="match status" value="1"/>
</dbReference>
<dbReference type="FunFam" id="1.20.58.1770:FF:000004">
    <property type="entry name" value="Rab interacting lysosomal protein"/>
    <property type="match status" value="1"/>
</dbReference>
<dbReference type="Gene3D" id="1.20.58.1770">
    <property type="match status" value="1"/>
</dbReference>
<dbReference type="Gene3D" id="6.10.230.10">
    <property type="match status" value="1"/>
</dbReference>
<dbReference type="InterPro" id="IPR051241">
    <property type="entry name" value="DZIP_RILPL"/>
</dbReference>
<dbReference type="InterPro" id="IPR034743">
    <property type="entry name" value="RH1"/>
</dbReference>
<dbReference type="InterPro" id="IPR034744">
    <property type="entry name" value="RH2"/>
</dbReference>
<dbReference type="InterPro" id="IPR021563">
    <property type="entry name" value="RILP_dimer"/>
</dbReference>
<dbReference type="PANTHER" id="PTHR21502:SF7">
    <property type="entry name" value="RAB-INTERACTING LYSOSOMAL PROTEIN"/>
    <property type="match status" value="1"/>
</dbReference>
<dbReference type="PANTHER" id="PTHR21502">
    <property type="entry name" value="ZINC FINGER PROTEIN DZIP1"/>
    <property type="match status" value="1"/>
</dbReference>
<dbReference type="Pfam" id="PF09744">
    <property type="entry name" value="RH1"/>
    <property type="match status" value="1"/>
</dbReference>
<dbReference type="Pfam" id="PF11461">
    <property type="entry name" value="RILP"/>
    <property type="match status" value="1"/>
</dbReference>
<dbReference type="SUPFAM" id="SSF161256">
    <property type="entry name" value="RILP dimerisation region"/>
    <property type="match status" value="1"/>
</dbReference>
<dbReference type="PROSITE" id="PS51776">
    <property type="entry name" value="RH1"/>
    <property type="match status" value="1"/>
</dbReference>
<dbReference type="PROSITE" id="PS51777">
    <property type="entry name" value="RH2"/>
    <property type="match status" value="1"/>
</dbReference>
<name>RILP_MOUSE</name>
<protein>
    <recommendedName>
        <fullName>Rab-interacting lysosomal protein</fullName>
    </recommendedName>
</protein>
<reference key="1">
    <citation type="journal article" date="2005" name="Science">
        <title>The transcriptional landscape of the mammalian genome.</title>
        <authorList>
            <person name="Carninci P."/>
            <person name="Kasukawa T."/>
            <person name="Katayama S."/>
            <person name="Gough J."/>
            <person name="Frith M.C."/>
            <person name="Maeda N."/>
            <person name="Oyama R."/>
            <person name="Ravasi T."/>
            <person name="Lenhard B."/>
            <person name="Wells C."/>
            <person name="Kodzius R."/>
            <person name="Shimokawa K."/>
            <person name="Bajic V.B."/>
            <person name="Brenner S.E."/>
            <person name="Batalov S."/>
            <person name="Forrest A.R."/>
            <person name="Zavolan M."/>
            <person name="Davis M.J."/>
            <person name="Wilming L.G."/>
            <person name="Aidinis V."/>
            <person name="Allen J.E."/>
            <person name="Ambesi-Impiombato A."/>
            <person name="Apweiler R."/>
            <person name="Aturaliya R.N."/>
            <person name="Bailey T.L."/>
            <person name="Bansal M."/>
            <person name="Baxter L."/>
            <person name="Beisel K.W."/>
            <person name="Bersano T."/>
            <person name="Bono H."/>
            <person name="Chalk A.M."/>
            <person name="Chiu K.P."/>
            <person name="Choudhary V."/>
            <person name="Christoffels A."/>
            <person name="Clutterbuck D.R."/>
            <person name="Crowe M.L."/>
            <person name="Dalla E."/>
            <person name="Dalrymple B.P."/>
            <person name="de Bono B."/>
            <person name="Della Gatta G."/>
            <person name="di Bernardo D."/>
            <person name="Down T."/>
            <person name="Engstrom P."/>
            <person name="Fagiolini M."/>
            <person name="Faulkner G."/>
            <person name="Fletcher C.F."/>
            <person name="Fukushima T."/>
            <person name="Furuno M."/>
            <person name="Futaki S."/>
            <person name="Gariboldi M."/>
            <person name="Georgii-Hemming P."/>
            <person name="Gingeras T.R."/>
            <person name="Gojobori T."/>
            <person name="Green R.E."/>
            <person name="Gustincich S."/>
            <person name="Harbers M."/>
            <person name="Hayashi Y."/>
            <person name="Hensch T.K."/>
            <person name="Hirokawa N."/>
            <person name="Hill D."/>
            <person name="Huminiecki L."/>
            <person name="Iacono M."/>
            <person name="Ikeo K."/>
            <person name="Iwama A."/>
            <person name="Ishikawa T."/>
            <person name="Jakt M."/>
            <person name="Kanapin A."/>
            <person name="Katoh M."/>
            <person name="Kawasawa Y."/>
            <person name="Kelso J."/>
            <person name="Kitamura H."/>
            <person name="Kitano H."/>
            <person name="Kollias G."/>
            <person name="Krishnan S.P."/>
            <person name="Kruger A."/>
            <person name="Kummerfeld S.K."/>
            <person name="Kurochkin I.V."/>
            <person name="Lareau L.F."/>
            <person name="Lazarevic D."/>
            <person name="Lipovich L."/>
            <person name="Liu J."/>
            <person name="Liuni S."/>
            <person name="McWilliam S."/>
            <person name="Madan Babu M."/>
            <person name="Madera M."/>
            <person name="Marchionni L."/>
            <person name="Matsuda H."/>
            <person name="Matsuzawa S."/>
            <person name="Miki H."/>
            <person name="Mignone F."/>
            <person name="Miyake S."/>
            <person name="Morris K."/>
            <person name="Mottagui-Tabar S."/>
            <person name="Mulder N."/>
            <person name="Nakano N."/>
            <person name="Nakauchi H."/>
            <person name="Ng P."/>
            <person name="Nilsson R."/>
            <person name="Nishiguchi S."/>
            <person name="Nishikawa S."/>
            <person name="Nori F."/>
            <person name="Ohara O."/>
            <person name="Okazaki Y."/>
            <person name="Orlando V."/>
            <person name="Pang K.C."/>
            <person name="Pavan W.J."/>
            <person name="Pavesi G."/>
            <person name="Pesole G."/>
            <person name="Petrovsky N."/>
            <person name="Piazza S."/>
            <person name="Reed J."/>
            <person name="Reid J.F."/>
            <person name="Ring B.Z."/>
            <person name="Ringwald M."/>
            <person name="Rost B."/>
            <person name="Ruan Y."/>
            <person name="Salzberg S.L."/>
            <person name="Sandelin A."/>
            <person name="Schneider C."/>
            <person name="Schoenbach C."/>
            <person name="Sekiguchi K."/>
            <person name="Semple C.A."/>
            <person name="Seno S."/>
            <person name="Sessa L."/>
            <person name="Sheng Y."/>
            <person name="Shibata Y."/>
            <person name="Shimada H."/>
            <person name="Shimada K."/>
            <person name="Silva D."/>
            <person name="Sinclair B."/>
            <person name="Sperling S."/>
            <person name="Stupka E."/>
            <person name="Sugiura K."/>
            <person name="Sultana R."/>
            <person name="Takenaka Y."/>
            <person name="Taki K."/>
            <person name="Tammoja K."/>
            <person name="Tan S.L."/>
            <person name="Tang S."/>
            <person name="Taylor M.S."/>
            <person name="Tegner J."/>
            <person name="Teichmann S.A."/>
            <person name="Ueda H.R."/>
            <person name="van Nimwegen E."/>
            <person name="Verardo R."/>
            <person name="Wei C.L."/>
            <person name="Yagi K."/>
            <person name="Yamanishi H."/>
            <person name="Zabarovsky E."/>
            <person name="Zhu S."/>
            <person name="Zimmer A."/>
            <person name="Hide W."/>
            <person name="Bult C."/>
            <person name="Grimmond S.M."/>
            <person name="Teasdale R.D."/>
            <person name="Liu E.T."/>
            <person name="Brusic V."/>
            <person name="Quackenbush J."/>
            <person name="Wahlestedt C."/>
            <person name="Mattick J.S."/>
            <person name="Hume D.A."/>
            <person name="Kai C."/>
            <person name="Sasaki D."/>
            <person name="Tomaru Y."/>
            <person name="Fukuda S."/>
            <person name="Kanamori-Katayama M."/>
            <person name="Suzuki M."/>
            <person name="Aoki J."/>
            <person name="Arakawa T."/>
            <person name="Iida J."/>
            <person name="Imamura K."/>
            <person name="Itoh M."/>
            <person name="Kato T."/>
            <person name="Kawaji H."/>
            <person name="Kawagashira N."/>
            <person name="Kawashima T."/>
            <person name="Kojima M."/>
            <person name="Kondo S."/>
            <person name="Konno H."/>
            <person name="Nakano K."/>
            <person name="Ninomiya N."/>
            <person name="Nishio T."/>
            <person name="Okada M."/>
            <person name="Plessy C."/>
            <person name="Shibata K."/>
            <person name="Shiraki T."/>
            <person name="Suzuki S."/>
            <person name="Tagami M."/>
            <person name="Waki K."/>
            <person name="Watahiki A."/>
            <person name="Okamura-Oho Y."/>
            <person name="Suzuki H."/>
            <person name="Kawai J."/>
            <person name="Hayashizaki Y."/>
        </authorList>
    </citation>
    <scope>NUCLEOTIDE SEQUENCE [LARGE SCALE MRNA]</scope>
    <source>
        <strain>C57BL/6J</strain>
        <tissue>Aorta</tissue>
        <tissue>Vein</tissue>
    </source>
</reference>
<reference key="2">
    <citation type="journal article" date="2009" name="PLoS Biol.">
        <title>Lineage-specific biology revealed by a finished genome assembly of the mouse.</title>
        <authorList>
            <person name="Church D.M."/>
            <person name="Goodstadt L."/>
            <person name="Hillier L.W."/>
            <person name="Zody M.C."/>
            <person name="Goldstein S."/>
            <person name="She X."/>
            <person name="Bult C.J."/>
            <person name="Agarwala R."/>
            <person name="Cherry J.L."/>
            <person name="DiCuccio M."/>
            <person name="Hlavina W."/>
            <person name="Kapustin Y."/>
            <person name="Meric P."/>
            <person name="Maglott D."/>
            <person name="Birtle Z."/>
            <person name="Marques A.C."/>
            <person name="Graves T."/>
            <person name="Zhou S."/>
            <person name="Teague B."/>
            <person name="Potamousis K."/>
            <person name="Churas C."/>
            <person name="Place M."/>
            <person name="Herschleb J."/>
            <person name="Runnheim R."/>
            <person name="Forrest D."/>
            <person name="Amos-Landgraf J."/>
            <person name="Schwartz D.C."/>
            <person name="Cheng Z."/>
            <person name="Lindblad-Toh K."/>
            <person name="Eichler E.E."/>
            <person name="Ponting C.P."/>
        </authorList>
    </citation>
    <scope>NUCLEOTIDE SEQUENCE [LARGE SCALE GENOMIC DNA]</scope>
    <source>
        <strain>C57BL/6J</strain>
    </source>
</reference>
<reference key="3">
    <citation type="journal article" date="2004" name="Genome Res.">
        <title>The status, quality, and expansion of the NIH full-length cDNA project: the Mammalian Gene Collection (MGC).</title>
        <authorList>
            <consortium name="The MGC Project Team"/>
        </authorList>
    </citation>
    <scope>NUCLEOTIDE SEQUENCE [LARGE SCALE MRNA] OF 164-369</scope>
    <source>
        <strain>C57BL/6J</strain>
        <tissue>Mammary gland</tissue>
    </source>
</reference>
<reference key="4">
    <citation type="journal article" date="2010" name="Cell">
        <title>A tissue-specific atlas of mouse protein phosphorylation and expression.</title>
        <authorList>
            <person name="Huttlin E.L."/>
            <person name="Jedrychowski M.P."/>
            <person name="Elias J.E."/>
            <person name="Goswami T."/>
            <person name="Rad R."/>
            <person name="Beausoleil S.A."/>
            <person name="Villen J."/>
            <person name="Haas W."/>
            <person name="Sowa M.E."/>
            <person name="Gygi S.P."/>
        </authorList>
    </citation>
    <scope>IDENTIFICATION BY MASS SPECTROMETRY [LARGE SCALE ANALYSIS]</scope>
    <source>
        <tissue>Heart</tissue>
        <tissue>Kidney</tissue>
        <tissue>Liver</tissue>
        <tissue>Testis</tissue>
    </source>
</reference>
<reference key="5">
    <citation type="journal article" date="2012" name="J. Cell Sci.">
        <title>Melanoregulin regulates retrograde melanosome transport through interaction with the RILP-p150Glued complex in melanocytes.</title>
        <authorList>
            <person name="Ohbayashi N."/>
            <person name="Maruta Y."/>
            <person name="Ishida M."/>
            <person name="Fukuda M."/>
        </authorList>
    </citation>
    <scope>INTERACTION WITH MREG</scope>
    <scope>IDENTIFICATION IN A COMPLEX WITH MREG AND RILP</scope>
</reference>